<sequence>MSKQNHFLVINGKNCCVFRDENIAKVLPPVLGLEFVFGLLGNGLALWIFCFHLKSWKSSRIFLFNLAVADFLLIICLPFLTDNYVQNWDWRFGSIPCRVMLFMLAMNRQGSIIFLTVVAVDRYFRVVHPHHFLNKISNRTAAIISCFLWGITIGLTVHLLYTDMMTRNGDANLCSSFSICYTFRWHDAMFLLEFFLPLGIILFCSGRIIWSLRQRQMDRHVKIKRAINFIMVVAIVFVICFLPSVAVRIRIFWLLYKHNVRNCDIYSSVDLAFFTTLSFTYMNSMLDPVVYYFSSPSFPNFFSTCINRCLRRKTLGEPDNNRSTSVELTGDPSTIRSIPGALMTDPSEPGSPPYLASTSR</sequence>
<feature type="chain" id="PRO_0000069606" description="Hydroxycarboxylic acid receptor 2">
    <location>
        <begin position="1"/>
        <end position="360"/>
    </location>
</feature>
<feature type="topological domain" description="Extracellular" evidence="2">
    <location>
        <begin position="1"/>
        <end position="30"/>
    </location>
</feature>
<feature type="transmembrane region" description="Helical; Name=1" evidence="2">
    <location>
        <begin position="31"/>
        <end position="51"/>
    </location>
</feature>
<feature type="topological domain" description="Cytoplasmic" evidence="2">
    <location>
        <begin position="52"/>
        <end position="60"/>
    </location>
</feature>
<feature type="transmembrane region" description="Helical; Name=2" evidence="2">
    <location>
        <begin position="61"/>
        <end position="81"/>
    </location>
</feature>
<feature type="topological domain" description="Extracellular" evidence="2">
    <location>
        <begin position="82"/>
        <end position="98"/>
    </location>
</feature>
<feature type="transmembrane region" description="Helical; Name=3" evidence="2">
    <location>
        <begin position="99"/>
        <end position="119"/>
    </location>
</feature>
<feature type="topological domain" description="Cytoplasmic" evidence="2">
    <location>
        <begin position="120"/>
        <end position="140"/>
    </location>
</feature>
<feature type="transmembrane region" description="Helical; Name=4" evidence="2">
    <location>
        <begin position="141"/>
        <end position="161"/>
    </location>
</feature>
<feature type="topological domain" description="Extracellular" evidence="2">
    <location>
        <begin position="162"/>
        <end position="189"/>
    </location>
</feature>
<feature type="transmembrane region" description="Helical; Name=5" evidence="2">
    <location>
        <begin position="190"/>
        <end position="210"/>
    </location>
</feature>
<feature type="topological domain" description="Cytoplasmic" evidence="2">
    <location>
        <begin position="211"/>
        <end position="226"/>
    </location>
</feature>
<feature type="transmembrane region" description="Helical; Name=6" evidence="2">
    <location>
        <begin position="227"/>
        <end position="247"/>
    </location>
</feature>
<feature type="topological domain" description="Extracellular" evidence="2">
    <location>
        <begin position="248"/>
        <end position="270"/>
    </location>
</feature>
<feature type="transmembrane region" description="Helical; Name=7" evidence="2">
    <location>
        <begin position="271"/>
        <end position="291"/>
    </location>
</feature>
<feature type="topological domain" description="Cytoplasmic" evidence="2">
    <location>
        <begin position="292"/>
        <end position="360"/>
    </location>
</feature>
<feature type="region of interest" description="Disordered" evidence="4">
    <location>
        <begin position="320"/>
        <end position="360"/>
    </location>
</feature>
<feature type="compositionally biased region" description="Polar residues" evidence="4">
    <location>
        <begin position="321"/>
        <end position="336"/>
    </location>
</feature>
<feature type="modified residue" description="Phosphoserine" evidence="1">
    <location>
        <position position="325"/>
    </location>
</feature>
<feature type="disulfide bond" evidence="3">
    <location>
        <begin position="97"/>
        <end position="174"/>
    </location>
</feature>
<dbReference type="EMBL" id="AB103062">
    <property type="protein sequence ID" value="BAC58009.1"/>
    <property type="molecule type" value="mRNA"/>
</dbReference>
<dbReference type="RefSeq" id="NP_852141.1">
    <property type="nucleotide sequence ID" value="NM_181476.2"/>
</dbReference>
<dbReference type="SMR" id="Q80Z39"/>
<dbReference type="FunCoup" id="Q80Z39">
    <property type="interactions" value="108"/>
</dbReference>
<dbReference type="STRING" id="10116.ENSRNOP00000036057"/>
<dbReference type="BindingDB" id="Q80Z39"/>
<dbReference type="ChEMBL" id="CHEMBL4731"/>
<dbReference type="DrugCentral" id="Q80Z39"/>
<dbReference type="GuidetoPHARMACOLOGY" id="312"/>
<dbReference type="iPTMnet" id="Q80Z39"/>
<dbReference type="PhosphoSitePlus" id="Q80Z39"/>
<dbReference type="PaxDb" id="10116-ENSRNOP00000036057"/>
<dbReference type="Ensembl" id="ENSRNOT00000032249.2">
    <property type="protein sequence ID" value="ENSRNOP00000036057.1"/>
    <property type="gene ID" value="ENSRNOG00000026653.2"/>
</dbReference>
<dbReference type="GeneID" id="353250"/>
<dbReference type="KEGG" id="rno:353250"/>
<dbReference type="UCSC" id="RGD:727952">
    <property type="organism name" value="rat"/>
</dbReference>
<dbReference type="AGR" id="RGD:727952"/>
<dbReference type="CTD" id="338442"/>
<dbReference type="RGD" id="727952">
    <property type="gene designation" value="Hcar2"/>
</dbReference>
<dbReference type="eggNOG" id="KOG3656">
    <property type="taxonomic scope" value="Eukaryota"/>
</dbReference>
<dbReference type="GeneTree" id="ENSGT00990000203619"/>
<dbReference type="HOGENOM" id="CLU_009579_8_2_1"/>
<dbReference type="InParanoid" id="Q80Z39"/>
<dbReference type="OMA" id="KWDWKFG"/>
<dbReference type="OrthoDB" id="10055255at2759"/>
<dbReference type="PhylomeDB" id="Q80Z39"/>
<dbReference type="TreeFam" id="TF330775"/>
<dbReference type="Reactome" id="R-RNO-3296197">
    <property type="pathway name" value="Hydroxycarboxylic acid-binding receptors"/>
</dbReference>
<dbReference type="Reactome" id="R-RNO-373076">
    <property type="pathway name" value="Class A/1 (Rhodopsin-like receptors)"/>
</dbReference>
<dbReference type="Reactome" id="R-RNO-418594">
    <property type="pathway name" value="G alpha (i) signalling events"/>
</dbReference>
<dbReference type="PRO" id="PR:Q80Z39"/>
<dbReference type="Proteomes" id="UP000002494">
    <property type="component" value="Chromosome 12"/>
</dbReference>
<dbReference type="Bgee" id="ENSRNOG00000026653">
    <property type="expression patterns" value="Expressed in spleen and 12 other cell types or tissues"/>
</dbReference>
<dbReference type="GO" id="GO:0005886">
    <property type="term" value="C:plasma membrane"/>
    <property type="evidence" value="ECO:0000250"/>
    <property type="project" value="UniProtKB"/>
</dbReference>
<dbReference type="GO" id="GO:0005525">
    <property type="term" value="F:GTP binding"/>
    <property type="evidence" value="ECO:0007669"/>
    <property type="project" value="Ensembl"/>
</dbReference>
<dbReference type="GO" id="GO:0070553">
    <property type="term" value="F:nicotinic acid receptor activity"/>
    <property type="evidence" value="ECO:0000314"/>
    <property type="project" value="UniProtKB"/>
</dbReference>
<dbReference type="GO" id="GO:0001614">
    <property type="term" value="F:purinergic nucleotide receptor activity"/>
    <property type="evidence" value="ECO:0007669"/>
    <property type="project" value="Ensembl"/>
</dbReference>
<dbReference type="GO" id="GO:0007186">
    <property type="term" value="P:G protein-coupled receptor signaling pathway"/>
    <property type="evidence" value="ECO:0000318"/>
    <property type="project" value="GO_Central"/>
</dbReference>
<dbReference type="GO" id="GO:0050995">
    <property type="term" value="P:negative regulation of lipid catabolic process"/>
    <property type="evidence" value="ECO:0000314"/>
    <property type="project" value="UniProtKB"/>
</dbReference>
<dbReference type="GO" id="GO:0001781">
    <property type="term" value="P:neutrophil apoptotic process"/>
    <property type="evidence" value="ECO:0000266"/>
    <property type="project" value="RGD"/>
</dbReference>
<dbReference type="GO" id="GO:0070165">
    <property type="term" value="P:positive regulation of adiponectin secretion"/>
    <property type="evidence" value="ECO:0000314"/>
    <property type="project" value="UniProtKB"/>
</dbReference>
<dbReference type="GO" id="GO:0033031">
    <property type="term" value="P:positive regulation of neutrophil apoptotic process"/>
    <property type="evidence" value="ECO:0000250"/>
    <property type="project" value="UniProtKB"/>
</dbReference>
<dbReference type="CDD" id="cd15201">
    <property type="entry name" value="7tmA_HCAR1-3"/>
    <property type="match status" value="1"/>
</dbReference>
<dbReference type="FunFam" id="1.20.1070.10:FF:000241">
    <property type="entry name" value="Hydroxycarboxylic acid receptor 1"/>
    <property type="match status" value="1"/>
</dbReference>
<dbReference type="Gene3D" id="1.20.1070.10">
    <property type="entry name" value="Rhodopsin 7-helix transmembrane proteins"/>
    <property type="match status" value="1"/>
</dbReference>
<dbReference type="InterPro" id="IPR000276">
    <property type="entry name" value="GPCR_Rhodpsn"/>
</dbReference>
<dbReference type="InterPro" id="IPR017452">
    <property type="entry name" value="GPCR_Rhodpsn_7TM"/>
</dbReference>
<dbReference type="InterPro" id="IPR051893">
    <property type="entry name" value="HCARs"/>
</dbReference>
<dbReference type="PANTHER" id="PTHR46048">
    <property type="entry name" value="HYDROXYCARBOXYLIC ACID RECEPTOR 2"/>
    <property type="match status" value="1"/>
</dbReference>
<dbReference type="PANTHER" id="PTHR46048:SF6">
    <property type="entry name" value="HYDROXYCARBOXYLIC ACID RECEPTOR 2"/>
    <property type="match status" value="1"/>
</dbReference>
<dbReference type="Pfam" id="PF00001">
    <property type="entry name" value="7tm_1"/>
    <property type="match status" value="1"/>
</dbReference>
<dbReference type="PRINTS" id="PR00237">
    <property type="entry name" value="GPCRRHODOPSN"/>
</dbReference>
<dbReference type="SUPFAM" id="SSF81321">
    <property type="entry name" value="Family A G protein-coupled receptor-like"/>
    <property type="match status" value="1"/>
</dbReference>
<dbReference type="PROSITE" id="PS00237">
    <property type="entry name" value="G_PROTEIN_RECEP_F1_1"/>
    <property type="match status" value="1"/>
</dbReference>
<dbReference type="PROSITE" id="PS50262">
    <property type="entry name" value="G_PROTEIN_RECEP_F1_2"/>
    <property type="match status" value="1"/>
</dbReference>
<organism>
    <name type="scientific">Rattus norvegicus</name>
    <name type="common">Rat</name>
    <dbReference type="NCBI Taxonomy" id="10116"/>
    <lineage>
        <taxon>Eukaryota</taxon>
        <taxon>Metazoa</taxon>
        <taxon>Chordata</taxon>
        <taxon>Craniata</taxon>
        <taxon>Vertebrata</taxon>
        <taxon>Euteleostomi</taxon>
        <taxon>Mammalia</taxon>
        <taxon>Eutheria</taxon>
        <taxon>Euarchontoglires</taxon>
        <taxon>Glires</taxon>
        <taxon>Rodentia</taxon>
        <taxon>Myomorpha</taxon>
        <taxon>Muroidea</taxon>
        <taxon>Muridae</taxon>
        <taxon>Murinae</taxon>
        <taxon>Rattus</taxon>
    </lineage>
</organism>
<evidence type="ECO:0000250" key="1">
    <source>
        <dbReference type="UniProtKB" id="Q9EP66"/>
    </source>
</evidence>
<evidence type="ECO:0000255" key="2"/>
<evidence type="ECO:0000255" key="3">
    <source>
        <dbReference type="PROSITE-ProRule" id="PRU00521"/>
    </source>
</evidence>
<evidence type="ECO:0000256" key="4">
    <source>
        <dbReference type="SAM" id="MobiDB-lite"/>
    </source>
</evidence>
<evidence type="ECO:0000269" key="5">
    <source>
    </source>
</evidence>
<evidence type="ECO:0000269" key="6">
    <source>
    </source>
</evidence>
<evidence type="ECO:0000269" key="7">
    <source>
    </source>
</evidence>
<comment type="function">
    <text evidence="5 6 7">Acts as a high affinity receptor for both nicotinic acid (also known as niacin) and (D)-beta-hydroxybutyrate and mediates increased adiponectin secretion and decreased lipolysis through G(i)-protein-mediated inhibition of adenylyl cyclase. This pharmacological effect requires nicotinic acid doses that are much higher than those provided by a normal diet. Mediates nicotinic acid-induced apoptosis in mature neutrophils. Receptor activation by nicotinic acid results in reduced cAMP levels which may affect activity of cAMP-dependent protein kinase A and phosphorylation of target proteins, leading to neutrophil apoptosis. The rank order of potency for the displacement of nicotinic acid binding is 5-methyl pyrazole-3-carboxylic acid = pyridine-3-acetic acid &gt; acifran &gt; 5-methyl nicotinic acid = acipimox &gt;&gt; nicotinuric acid = nicotinamide.</text>
</comment>
<comment type="subcellular location">
    <subcellularLocation>
        <location>Cell membrane</location>
        <topology>Multi-pass membrane protein</topology>
    </subcellularLocation>
</comment>
<comment type="tissue specificity">
    <text evidence="5 6">Expressed in adipose tissue, lung and spleen.</text>
</comment>
<comment type="similarity">
    <text evidence="3">Belongs to the G-protein coupled receptor 1 family.</text>
</comment>
<keyword id="KW-0053">Apoptosis</keyword>
<keyword id="KW-1003">Cell membrane</keyword>
<keyword id="KW-1015">Disulfide bond</keyword>
<keyword id="KW-0297">G-protein coupled receptor</keyword>
<keyword id="KW-0472">Membrane</keyword>
<keyword id="KW-0597">Phosphoprotein</keyword>
<keyword id="KW-0675">Receptor</keyword>
<keyword id="KW-1185">Reference proteome</keyword>
<keyword id="KW-0807">Transducer</keyword>
<keyword id="KW-0812">Transmembrane</keyword>
<keyword id="KW-1133">Transmembrane helix</keyword>
<reference key="1">
    <citation type="journal article" date="2003" name="Biochem. Biophys. Res. Commun.">
        <title>Molecular identification of nicotinic acid receptor.</title>
        <authorList>
            <person name="Soga T."/>
            <person name="Kamohara M."/>
            <person name="Takasaki J."/>
            <person name="Matsumoto S."/>
            <person name="Saito T."/>
            <person name="Ohishi T."/>
            <person name="Hiyama H."/>
            <person name="Matsuo A."/>
            <person name="Matsushime H."/>
            <person name="Furuichi K."/>
        </authorList>
    </citation>
    <scope>NUCLEOTIDE SEQUENCE [MRNA]</scope>
    <scope>FUNCTION</scope>
    <scope>TISSUE SPECIFICITY</scope>
</reference>
<reference key="2">
    <citation type="journal article" date="2003" name="J. Biol. Chem.">
        <title>Molecular identification of high and low affinity receptors for nicotinic acid.</title>
        <authorList>
            <person name="Wise A."/>
            <person name="Foord S.M."/>
            <person name="Fraser N.J."/>
            <person name="Barnes A.A."/>
            <person name="Elshourbagy N."/>
            <person name="Eilert M."/>
            <person name="Ignar D.M."/>
            <person name="Murdock P.R."/>
            <person name="Steplewski K."/>
            <person name="Green A."/>
            <person name="Brown A.J."/>
            <person name="Dowell S.J."/>
            <person name="Szekeres P.G."/>
            <person name="Hassall D.G."/>
            <person name="Marshall F.H."/>
            <person name="Wilson S."/>
            <person name="Pike N.B."/>
        </authorList>
    </citation>
    <scope>FUNCTION</scope>
    <scope>TISSUE SPECIFICITY</scope>
    <scope>CHARACTERIZATION</scope>
</reference>
<reference key="3">
    <citation type="journal article" date="2009" name="Am. J. Physiol.">
        <title>Niacin stimulates adiponectin secretion through the GPR109A receptor.</title>
        <authorList>
            <person name="Plaisance E.P."/>
            <person name="Lukasova M."/>
            <person name="Offermanns S."/>
            <person name="Zhang Y."/>
            <person name="Cao G."/>
            <person name="Judd R.L."/>
        </authorList>
    </citation>
    <scope>FUNCTION</scope>
</reference>
<gene>
    <name type="primary">Hcar2</name>
    <name type="synonym">Gpr109</name>
    <name type="synonym">Gpr109a</name>
    <name type="synonym">Gpr109b</name>
    <name type="synonym">Niacr1</name>
    <name type="synonym">Pumag</name>
</gene>
<accession>Q80Z39</accession>
<proteinExistence type="evidence at protein level"/>
<protein>
    <recommendedName>
        <fullName>Hydroxycarboxylic acid receptor 2</fullName>
    </recommendedName>
    <alternativeName>
        <fullName>G-protein coupled receptor 109</fullName>
    </alternativeName>
    <alternativeName>
        <fullName>G-protein coupled receptor 109A</fullName>
    </alternativeName>
    <alternativeName>
        <fullName>G-protein coupled receptor HM74</fullName>
    </alternativeName>
    <alternativeName>
        <fullName>Niacin receptor 1</fullName>
    </alternativeName>
    <alternativeName>
        <fullName>Nicotinic acid receptor</fullName>
    </alternativeName>
    <alternativeName>
        <fullName>Protein PUMA-G</fullName>
    </alternativeName>
</protein>
<name>HCAR2_RAT</name>